<feature type="chain" id="PRO_0000224232" description="Chaperone protein HtpG">
    <location>
        <begin position="1"/>
        <end position="624"/>
    </location>
</feature>
<feature type="region of interest" description="A; substrate-binding" evidence="1">
    <location>
        <begin position="1"/>
        <end position="336"/>
    </location>
</feature>
<feature type="region of interest" description="B" evidence="1">
    <location>
        <begin position="337"/>
        <end position="552"/>
    </location>
</feature>
<feature type="region of interest" description="C" evidence="1">
    <location>
        <begin position="553"/>
        <end position="624"/>
    </location>
</feature>
<keyword id="KW-0067">ATP-binding</keyword>
<keyword id="KW-0143">Chaperone</keyword>
<keyword id="KW-0963">Cytoplasm</keyword>
<keyword id="KW-0547">Nucleotide-binding</keyword>
<keyword id="KW-1185">Reference proteome</keyword>
<keyword id="KW-0346">Stress response</keyword>
<comment type="function">
    <text evidence="1">Molecular chaperone. Has ATPase activity.</text>
</comment>
<comment type="subunit">
    <text evidence="1">Homodimer.</text>
</comment>
<comment type="subcellular location">
    <subcellularLocation>
        <location evidence="1">Cytoplasm</location>
    </subcellularLocation>
</comment>
<comment type="similarity">
    <text evidence="1">Belongs to the heat shock protein 90 family.</text>
</comment>
<evidence type="ECO:0000255" key="1">
    <source>
        <dbReference type="HAMAP-Rule" id="MF_00505"/>
    </source>
</evidence>
<accession>Q32J53</accession>
<reference key="1">
    <citation type="journal article" date="2005" name="Nucleic Acids Res.">
        <title>Genome dynamics and diversity of Shigella species, the etiologic agents of bacillary dysentery.</title>
        <authorList>
            <person name="Yang F."/>
            <person name="Yang J."/>
            <person name="Zhang X."/>
            <person name="Chen L."/>
            <person name="Jiang Y."/>
            <person name="Yan Y."/>
            <person name="Tang X."/>
            <person name="Wang J."/>
            <person name="Xiong Z."/>
            <person name="Dong J."/>
            <person name="Xue Y."/>
            <person name="Zhu Y."/>
            <person name="Xu X."/>
            <person name="Sun L."/>
            <person name="Chen S."/>
            <person name="Nie H."/>
            <person name="Peng J."/>
            <person name="Xu J."/>
            <person name="Wang Y."/>
            <person name="Yuan Z."/>
            <person name="Wen Y."/>
            <person name="Yao Z."/>
            <person name="Shen Y."/>
            <person name="Qiang B."/>
            <person name="Hou Y."/>
            <person name="Yu J."/>
            <person name="Jin Q."/>
        </authorList>
    </citation>
    <scope>NUCLEOTIDE SEQUENCE [LARGE SCALE GENOMIC DNA]</scope>
    <source>
        <strain>Sd197</strain>
    </source>
</reference>
<gene>
    <name evidence="1" type="primary">htpG</name>
    <name type="ordered locus">SDY_0446</name>
</gene>
<sequence>MKGQETRGFQSEVKQLLHLMIHSLYSNKEIFLRELISNASDAADKLRFRSLSNPDLYEGDGELRVRVSFDKDKRTLTISDNGVGMTRDEVIDHLGTIAKSGTKSFLESLGSDQAKDSQLIGQFGVGFYSAFIVADKVTVRTRAAGEKPENGVFWESAGEGEYTVADITKEDRGTEITLHLREGEDEFLDDWRVRSIISKYSDHIALPVEIEKCEEKDGETVISWEKINKAQALWTRNKSEITDEEYKEFYKHIAHDFNDPLTWSHNRVEGKQEYTSLLYIPSQAPWDMWNRDHKHGLKLYVQRVFIMDDAEQFMPNYLRFVRGLIDSSDLSLNVSREILQDSTVTRNLRNALTKRVLQMLEKLAKDDAEKYQTFWQQFGLVLKEGPAEDFANQEAIAKLLRFASTHTDSSAQTVSLEDYVSRMKEGQEKIYYITADSYAAAKSSPHLELLRKKGIEVLLLSDRIDEWMMNYLTEFDGKPFQSVSKVDESLEKLADEVDESAKEAEKALTPFIDRVKALLGERVKDVRLTHRLTDTPAIVSTDADEMSTQMAKLFAAAGQKVPEVKYIFELNPDHVLVKRAADTEDEAKFSEWVELLLDQALLAERGTLEDPNLFIRRMNQLLVS</sequence>
<organism>
    <name type="scientific">Shigella dysenteriae serotype 1 (strain Sd197)</name>
    <dbReference type="NCBI Taxonomy" id="300267"/>
    <lineage>
        <taxon>Bacteria</taxon>
        <taxon>Pseudomonadati</taxon>
        <taxon>Pseudomonadota</taxon>
        <taxon>Gammaproteobacteria</taxon>
        <taxon>Enterobacterales</taxon>
        <taxon>Enterobacteriaceae</taxon>
        <taxon>Shigella</taxon>
    </lineage>
</organism>
<name>HTPG_SHIDS</name>
<dbReference type="EMBL" id="CP000034">
    <property type="protein sequence ID" value="ABB60654.1"/>
    <property type="molecule type" value="Genomic_DNA"/>
</dbReference>
<dbReference type="RefSeq" id="WP_000678219.1">
    <property type="nucleotide sequence ID" value="NC_007606.1"/>
</dbReference>
<dbReference type="RefSeq" id="YP_402143.1">
    <property type="nucleotide sequence ID" value="NC_007606.1"/>
</dbReference>
<dbReference type="SMR" id="Q32J53"/>
<dbReference type="STRING" id="300267.SDY_0446"/>
<dbReference type="EnsemblBacteria" id="ABB60654">
    <property type="protein sequence ID" value="ABB60654"/>
    <property type="gene ID" value="SDY_0446"/>
</dbReference>
<dbReference type="KEGG" id="sdy:SDY_0446"/>
<dbReference type="PATRIC" id="fig|300267.13.peg.529"/>
<dbReference type="HOGENOM" id="CLU_006684_3_0_6"/>
<dbReference type="Proteomes" id="UP000002716">
    <property type="component" value="Chromosome"/>
</dbReference>
<dbReference type="GO" id="GO:0005737">
    <property type="term" value="C:cytoplasm"/>
    <property type="evidence" value="ECO:0007669"/>
    <property type="project" value="UniProtKB-SubCell"/>
</dbReference>
<dbReference type="GO" id="GO:0005524">
    <property type="term" value="F:ATP binding"/>
    <property type="evidence" value="ECO:0007669"/>
    <property type="project" value="UniProtKB-UniRule"/>
</dbReference>
<dbReference type="GO" id="GO:0016887">
    <property type="term" value="F:ATP hydrolysis activity"/>
    <property type="evidence" value="ECO:0007669"/>
    <property type="project" value="InterPro"/>
</dbReference>
<dbReference type="GO" id="GO:0140662">
    <property type="term" value="F:ATP-dependent protein folding chaperone"/>
    <property type="evidence" value="ECO:0007669"/>
    <property type="project" value="InterPro"/>
</dbReference>
<dbReference type="GO" id="GO:0051082">
    <property type="term" value="F:unfolded protein binding"/>
    <property type="evidence" value="ECO:0007669"/>
    <property type="project" value="UniProtKB-UniRule"/>
</dbReference>
<dbReference type="CDD" id="cd16927">
    <property type="entry name" value="HATPase_Hsp90-like"/>
    <property type="match status" value="1"/>
</dbReference>
<dbReference type="FunFam" id="1.20.120.790:FF:000002">
    <property type="entry name" value="Molecular chaperone HtpG"/>
    <property type="match status" value="1"/>
</dbReference>
<dbReference type="FunFam" id="3.30.230.80:FF:000002">
    <property type="entry name" value="Molecular chaperone HtpG"/>
    <property type="match status" value="1"/>
</dbReference>
<dbReference type="FunFam" id="3.30.565.10:FF:000009">
    <property type="entry name" value="Molecular chaperone HtpG"/>
    <property type="match status" value="1"/>
</dbReference>
<dbReference type="FunFam" id="3.40.50.11260:FF:000002">
    <property type="entry name" value="Molecular chaperone HtpG"/>
    <property type="match status" value="1"/>
</dbReference>
<dbReference type="Gene3D" id="3.30.230.80">
    <property type="match status" value="1"/>
</dbReference>
<dbReference type="Gene3D" id="3.40.50.11260">
    <property type="match status" value="1"/>
</dbReference>
<dbReference type="Gene3D" id="1.20.120.790">
    <property type="entry name" value="Heat shock protein 90, C-terminal domain"/>
    <property type="match status" value="1"/>
</dbReference>
<dbReference type="Gene3D" id="3.30.565.10">
    <property type="entry name" value="Histidine kinase-like ATPase, C-terminal domain"/>
    <property type="match status" value="1"/>
</dbReference>
<dbReference type="HAMAP" id="MF_00505">
    <property type="entry name" value="HSP90"/>
    <property type="match status" value="1"/>
</dbReference>
<dbReference type="InterPro" id="IPR036890">
    <property type="entry name" value="HATPase_C_sf"/>
</dbReference>
<dbReference type="InterPro" id="IPR019805">
    <property type="entry name" value="Heat_shock_protein_90_CS"/>
</dbReference>
<dbReference type="InterPro" id="IPR037196">
    <property type="entry name" value="HSP90_C"/>
</dbReference>
<dbReference type="InterPro" id="IPR001404">
    <property type="entry name" value="Hsp90_fam"/>
</dbReference>
<dbReference type="InterPro" id="IPR020575">
    <property type="entry name" value="Hsp90_N"/>
</dbReference>
<dbReference type="InterPro" id="IPR020568">
    <property type="entry name" value="Ribosomal_Su5_D2-typ_SF"/>
</dbReference>
<dbReference type="NCBIfam" id="NF003555">
    <property type="entry name" value="PRK05218.1"/>
    <property type="match status" value="1"/>
</dbReference>
<dbReference type="PANTHER" id="PTHR11528">
    <property type="entry name" value="HEAT SHOCK PROTEIN 90 FAMILY MEMBER"/>
    <property type="match status" value="1"/>
</dbReference>
<dbReference type="Pfam" id="PF13589">
    <property type="entry name" value="HATPase_c_3"/>
    <property type="match status" value="1"/>
</dbReference>
<dbReference type="Pfam" id="PF00183">
    <property type="entry name" value="HSP90"/>
    <property type="match status" value="1"/>
</dbReference>
<dbReference type="PIRSF" id="PIRSF002583">
    <property type="entry name" value="Hsp90"/>
    <property type="match status" value="1"/>
</dbReference>
<dbReference type="PRINTS" id="PR00775">
    <property type="entry name" value="HEATSHOCK90"/>
</dbReference>
<dbReference type="SMART" id="SM00387">
    <property type="entry name" value="HATPase_c"/>
    <property type="match status" value="1"/>
</dbReference>
<dbReference type="SUPFAM" id="SSF55874">
    <property type="entry name" value="ATPase domain of HSP90 chaperone/DNA topoisomerase II/histidine kinase"/>
    <property type="match status" value="1"/>
</dbReference>
<dbReference type="SUPFAM" id="SSF110942">
    <property type="entry name" value="HSP90 C-terminal domain"/>
    <property type="match status" value="1"/>
</dbReference>
<dbReference type="SUPFAM" id="SSF54211">
    <property type="entry name" value="Ribosomal protein S5 domain 2-like"/>
    <property type="match status" value="1"/>
</dbReference>
<dbReference type="PROSITE" id="PS00298">
    <property type="entry name" value="HSP90"/>
    <property type="match status" value="1"/>
</dbReference>
<protein>
    <recommendedName>
        <fullName evidence="1">Chaperone protein HtpG</fullName>
    </recommendedName>
    <alternativeName>
        <fullName evidence="1">Heat shock protein HtpG</fullName>
    </alternativeName>
    <alternativeName>
        <fullName evidence="1">High temperature protein G</fullName>
    </alternativeName>
</protein>
<proteinExistence type="inferred from homology"/>